<evidence type="ECO:0000255" key="1">
    <source>
        <dbReference type="HAMAP-Rule" id="MF_01320"/>
    </source>
</evidence>
<evidence type="ECO:0000256" key="2">
    <source>
        <dbReference type="SAM" id="MobiDB-lite"/>
    </source>
</evidence>
<evidence type="ECO:0000305" key="3"/>
<protein>
    <recommendedName>
        <fullName evidence="1">Large ribosomal subunit protein uL2</fullName>
    </recommendedName>
    <alternativeName>
        <fullName evidence="3">50S ribosomal protein L2</fullName>
    </alternativeName>
</protein>
<feature type="chain" id="PRO_1000141546" description="Large ribosomal subunit protein uL2">
    <location>
        <begin position="1"/>
        <end position="273"/>
    </location>
</feature>
<feature type="region of interest" description="Disordered" evidence="2">
    <location>
        <begin position="28"/>
        <end position="53"/>
    </location>
</feature>
<feature type="region of interest" description="Disordered" evidence="2">
    <location>
        <begin position="221"/>
        <end position="273"/>
    </location>
</feature>
<feature type="compositionally biased region" description="Low complexity" evidence="2">
    <location>
        <begin position="39"/>
        <end position="48"/>
    </location>
</feature>
<feature type="modified residue" description="N6-acetyllysine" evidence="1">
    <location>
        <position position="242"/>
    </location>
</feature>
<reference key="1">
    <citation type="journal article" date="2009" name="PLoS Genet.">
        <title>Organised genome dynamics in the Escherichia coli species results in highly diverse adaptive paths.</title>
        <authorList>
            <person name="Touchon M."/>
            <person name="Hoede C."/>
            <person name="Tenaillon O."/>
            <person name="Barbe V."/>
            <person name="Baeriswyl S."/>
            <person name="Bidet P."/>
            <person name="Bingen E."/>
            <person name="Bonacorsi S."/>
            <person name="Bouchier C."/>
            <person name="Bouvet O."/>
            <person name="Calteau A."/>
            <person name="Chiapello H."/>
            <person name="Clermont O."/>
            <person name="Cruveiller S."/>
            <person name="Danchin A."/>
            <person name="Diard M."/>
            <person name="Dossat C."/>
            <person name="Karoui M.E."/>
            <person name="Frapy E."/>
            <person name="Garry L."/>
            <person name="Ghigo J.M."/>
            <person name="Gilles A.M."/>
            <person name="Johnson J."/>
            <person name="Le Bouguenec C."/>
            <person name="Lescat M."/>
            <person name="Mangenot S."/>
            <person name="Martinez-Jehanne V."/>
            <person name="Matic I."/>
            <person name="Nassif X."/>
            <person name="Oztas S."/>
            <person name="Petit M.A."/>
            <person name="Pichon C."/>
            <person name="Rouy Z."/>
            <person name="Ruf C.S."/>
            <person name="Schneider D."/>
            <person name="Tourret J."/>
            <person name="Vacherie B."/>
            <person name="Vallenet D."/>
            <person name="Medigue C."/>
            <person name="Rocha E.P.C."/>
            <person name="Denamur E."/>
        </authorList>
    </citation>
    <scope>NUCLEOTIDE SEQUENCE [LARGE SCALE GENOMIC DNA]</scope>
    <source>
        <strain>IAI1</strain>
    </source>
</reference>
<sequence length="273" mass="29860">MAVVKCKPTSPGRRHVVKVVNPELHKGKPFAPLLEKNSKSGGRNNNGRITTRHIGGGHKQAYRIVDFKRNKDGIPAVVERLEYDPNRSANIALVLYKDGERRYILAPKGLKAGDQIQSGVDAAIKPGNTLPMRNIPVGSTVHNVEMKPGKGGQLARSAGTYVQIVARDGAYVTLRLRSGEMRKVEADCRATLGEVGNAEHMLRVLGKAGAARWRGVRPTVRGTAMNPVDHPHGGGEGRNFGKHPVTPWGVQTKGKKTRSNKRTDKFIVRRRSK</sequence>
<keyword id="KW-0007">Acetylation</keyword>
<keyword id="KW-0687">Ribonucleoprotein</keyword>
<keyword id="KW-0689">Ribosomal protein</keyword>
<keyword id="KW-0694">RNA-binding</keyword>
<keyword id="KW-0699">rRNA-binding</keyword>
<organism>
    <name type="scientific">Escherichia coli O8 (strain IAI1)</name>
    <dbReference type="NCBI Taxonomy" id="585034"/>
    <lineage>
        <taxon>Bacteria</taxon>
        <taxon>Pseudomonadati</taxon>
        <taxon>Pseudomonadota</taxon>
        <taxon>Gammaproteobacteria</taxon>
        <taxon>Enterobacterales</taxon>
        <taxon>Enterobacteriaceae</taxon>
        <taxon>Escherichia</taxon>
    </lineage>
</organism>
<comment type="function">
    <text evidence="1">One of the primary rRNA binding proteins. Required for association of the 30S and 50S subunits to form the 70S ribosome, for tRNA binding and peptide bond formation. It has been suggested to have peptidyltransferase activity; this is somewhat controversial. Makes several contacts with the 16S rRNA in the 70S ribosome.</text>
</comment>
<comment type="subunit">
    <text evidence="1">Part of the 50S ribosomal subunit. Forms a bridge to the 30S subunit in the 70S ribosome.</text>
</comment>
<comment type="similarity">
    <text evidence="1">Belongs to the universal ribosomal protein uL2 family.</text>
</comment>
<dbReference type="EMBL" id="CU928160">
    <property type="protein sequence ID" value="CAR00268.1"/>
    <property type="molecule type" value="Genomic_DNA"/>
</dbReference>
<dbReference type="RefSeq" id="WP_000301864.1">
    <property type="nucleotide sequence ID" value="NC_011741.1"/>
</dbReference>
<dbReference type="SMR" id="B7M1N1"/>
<dbReference type="GeneID" id="93778670"/>
<dbReference type="KEGG" id="ecr:ECIAI1_3466"/>
<dbReference type="HOGENOM" id="CLU_036235_2_1_6"/>
<dbReference type="GO" id="GO:0005829">
    <property type="term" value="C:cytosol"/>
    <property type="evidence" value="ECO:0007669"/>
    <property type="project" value="UniProtKB-ARBA"/>
</dbReference>
<dbReference type="GO" id="GO:0015934">
    <property type="term" value="C:large ribosomal subunit"/>
    <property type="evidence" value="ECO:0007669"/>
    <property type="project" value="InterPro"/>
</dbReference>
<dbReference type="GO" id="GO:0019843">
    <property type="term" value="F:rRNA binding"/>
    <property type="evidence" value="ECO:0007669"/>
    <property type="project" value="UniProtKB-UniRule"/>
</dbReference>
<dbReference type="GO" id="GO:0003735">
    <property type="term" value="F:structural constituent of ribosome"/>
    <property type="evidence" value="ECO:0007669"/>
    <property type="project" value="InterPro"/>
</dbReference>
<dbReference type="GO" id="GO:0016740">
    <property type="term" value="F:transferase activity"/>
    <property type="evidence" value="ECO:0007669"/>
    <property type="project" value="InterPro"/>
</dbReference>
<dbReference type="GO" id="GO:0002181">
    <property type="term" value="P:cytoplasmic translation"/>
    <property type="evidence" value="ECO:0007669"/>
    <property type="project" value="TreeGrafter"/>
</dbReference>
<dbReference type="FunFam" id="2.30.30.30:FF:000001">
    <property type="entry name" value="50S ribosomal protein L2"/>
    <property type="match status" value="1"/>
</dbReference>
<dbReference type="FunFam" id="2.40.50.140:FF:000003">
    <property type="entry name" value="50S ribosomal protein L2"/>
    <property type="match status" value="1"/>
</dbReference>
<dbReference type="FunFam" id="4.10.950.10:FF:000001">
    <property type="entry name" value="50S ribosomal protein L2"/>
    <property type="match status" value="1"/>
</dbReference>
<dbReference type="Gene3D" id="2.30.30.30">
    <property type="match status" value="1"/>
</dbReference>
<dbReference type="Gene3D" id="2.40.50.140">
    <property type="entry name" value="Nucleic acid-binding proteins"/>
    <property type="match status" value="1"/>
</dbReference>
<dbReference type="Gene3D" id="4.10.950.10">
    <property type="entry name" value="Ribosomal protein L2, domain 3"/>
    <property type="match status" value="1"/>
</dbReference>
<dbReference type="HAMAP" id="MF_01320_B">
    <property type="entry name" value="Ribosomal_uL2_B"/>
    <property type="match status" value="1"/>
</dbReference>
<dbReference type="InterPro" id="IPR012340">
    <property type="entry name" value="NA-bd_OB-fold"/>
</dbReference>
<dbReference type="InterPro" id="IPR014722">
    <property type="entry name" value="Rib_uL2_dom2"/>
</dbReference>
<dbReference type="InterPro" id="IPR002171">
    <property type="entry name" value="Ribosomal_uL2"/>
</dbReference>
<dbReference type="InterPro" id="IPR005880">
    <property type="entry name" value="Ribosomal_uL2_bac/org-type"/>
</dbReference>
<dbReference type="InterPro" id="IPR022669">
    <property type="entry name" value="Ribosomal_uL2_C"/>
</dbReference>
<dbReference type="InterPro" id="IPR022671">
    <property type="entry name" value="Ribosomal_uL2_CS"/>
</dbReference>
<dbReference type="InterPro" id="IPR014726">
    <property type="entry name" value="Ribosomal_uL2_dom3"/>
</dbReference>
<dbReference type="InterPro" id="IPR022666">
    <property type="entry name" value="Ribosomal_uL2_RNA-bd_dom"/>
</dbReference>
<dbReference type="InterPro" id="IPR008991">
    <property type="entry name" value="Translation_prot_SH3-like_sf"/>
</dbReference>
<dbReference type="NCBIfam" id="TIGR01171">
    <property type="entry name" value="rplB_bact"/>
    <property type="match status" value="1"/>
</dbReference>
<dbReference type="PANTHER" id="PTHR13691:SF5">
    <property type="entry name" value="LARGE RIBOSOMAL SUBUNIT PROTEIN UL2M"/>
    <property type="match status" value="1"/>
</dbReference>
<dbReference type="PANTHER" id="PTHR13691">
    <property type="entry name" value="RIBOSOMAL PROTEIN L2"/>
    <property type="match status" value="1"/>
</dbReference>
<dbReference type="Pfam" id="PF00181">
    <property type="entry name" value="Ribosomal_L2"/>
    <property type="match status" value="1"/>
</dbReference>
<dbReference type="Pfam" id="PF03947">
    <property type="entry name" value="Ribosomal_L2_C"/>
    <property type="match status" value="1"/>
</dbReference>
<dbReference type="PIRSF" id="PIRSF002158">
    <property type="entry name" value="Ribosomal_L2"/>
    <property type="match status" value="1"/>
</dbReference>
<dbReference type="SMART" id="SM01383">
    <property type="entry name" value="Ribosomal_L2"/>
    <property type="match status" value="1"/>
</dbReference>
<dbReference type="SMART" id="SM01382">
    <property type="entry name" value="Ribosomal_L2_C"/>
    <property type="match status" value="1"/>
</dbReference>
<dbReference type="SUPFAM" id="SSF50249">
    <property type="entry name" value="Nucleic acid-binding proteins"/>
    <property type="match status" value="1"/>
</dbReference>
<dbReference type="SUPFAM" id="SSF50104">
    <property type="entry name" value="Translation proteins SH3-like domain"/>
    <property type="match status" value="1"/>
</dbReference>
<dbReference type="PROSITE" id="PS00467">
    <property type="entry name" value="RIBOSOMAL_L2"/>
    <property type="match status" value="1"/>
</dbReference>
<proteinExistence type="inferred from homology"/>
<gene>
    <name evidence="1" type="primary">rplB</name>
    <name type="ordered locus">ECIAI1_3466</name>
</gene>
<accession>B7M1N1</accession>
<name>RL2_ECO8A</name>